<name>GKAX_PENCI</name>
<proteinExistence type="evidence at protein level"/>
<feature type="signal peptide" evidence="1">
    <location>
        <begin position="1"/>
        <end position="18"/>
    </location>
</feature>
<feature type="chain" id="PRO_5034303042" description="Epoxidase gkaX" evidence="1">
    <location>
        <begin position="19"/>
        <end position="161"/>
    </location>
</feature>
<feature type="transmembrane region" description="Helical" evidence="1">
    <location>
        <begin position="59"/>
        <end position="79"/>
    </location>
</feature>
<feature type="transmembrane region" description="Helical" evidence="1">
    <location>
        <begin position="92"/>
        <end position="112"/>
    </location>
</feature>
<feature type="transmembrane region" description="Helical" evidence="1">
    <location>
        <begin position="139"/>
        <end position="159"/>
    </location>
</feature>
<feature type="glycosylation site" description="N-linked (GlcNAc...) asparagine" evidence="2">
    <location>
        <position position="45"/>
    </location>
</feature>
<evidence type="ECO:0000255" key="1"/>
<evidence type="ECO:0000255" key="2">
    <source>
        <dbReference type="PROSITE-ProRule" id="PRU00498"/>
    </source>
</evidence>
<evidence type="ECO:0000269" key="3">
    <source>
    </source>
</evidence>
<evidence type="ECO:0000303" key="4">
    <source>
    </source>
</evidence>
<evidence type="ECO:0000305" key="5"/>
<evidence type="ECO:0000305" key="6">
    <source>
    </source>
</evidence>
<protein>
    <recommendedName>
        <fullName evidence="4">Epoxidase gkaX</fullName>
        <ecNumber evidence="3">1.14.-.-</ecNumber>
    </recommendedName>
    <alternativeName>
        <fullName evidence="4">GKK1032 biosynthesis cluster protein X</fullName>
    </alternativeName>
</protein>
<organism>
    <name type="scientific">Penicillium citrinum</name>
    <dbReference type="NCBI Taxonomy" id="5077"/>
    <lineage>
        <taxon>Eukaryota</taxon>
        <taxon>Fungi</taxon>
        <taxon>Dikarya</taxon>
        <taxon>Ascomycota</taxon>
        <taxon>Pezizomycotina</taxon>
        <taxon>Eurotiomycetes</taxon>
        <taxon>Eurotiomycetidae</taxon>
        <taxon>Eurotiales</taxon>
        <taxon>Aspergillaceae</taxon>
        <taxon>Penicillium</taxon>
    </lineage>
</organism>
<sequence>MSLSTSLRLLRLLPAISSTATLQFALDEHLIFGTWMGSFLRPHVNITLPTWWTHGGRRWQWILIIGYPLNYLFGILNLVARYDQLQSTGSTIWYVLGLFFSVGHMLFVKMALGRIAAIEKGVPKDNVRVSMGKWLQMNWVRALITDLPAWICWIMAAVSAM</sequence>
<dbReference type="EC" id="1.14.-.-" evidence="3"/>
<dbReference type="EMBL" id="MW690135">
    <property type="protein sequence ID" value="QXF14609.1"/>
    <property type="molecule type" value="Genomic_DNA"/>
</dbReference>
<dbReference type="GO" id="GO:0016020">
    <property type="term" value="C:membrane"/>
    <property type="evidence" value="ECO:0007669"/>
    <property type="project" value="UniProtKB-SubCell"/>
</dbReference>
<dbReference type="GO" id="GO:0016491">
    <property type="term" value="F:oxidoreductase activity"/>
    <property type="evidence" value="ECO:0007669"/>
    <property type="project" value="UniProtKB-KW"/>
</dbReference>
<accession>A0A8F4NWB9</accession>
<reference key="1">
    <citation type="journal article" date="2021" name="J. Am. Chem. Soc.">
        <title>Biosynthesis of para-cyclophane-containing hirsutellone family of fungal natural products.</title>
        <authorList>
            <person name="Ohashi M."/>
            <person name="Kakule T.B."/>
            <person name="Tang M.C."/>
            <person name="Jamieson C.S."/>
            <person name="Liu M."/>
            <person name="Zhao Y.L."/>
            <person name="Houk K.N."/>
            <person name="Tang Y."/>
        </authorList>
    </citation>
    <scope>NUCLEOTIDE SEQUENCE [GENOMIC DNA]</scope>
    <scope>FUNCTION</scope>
    <scope>CATALYTIC ACTIVITY</scope>
    <scope>PATHWAY</scope>
    <source>
        <strain>DSM 1997</strain>
    </source>
</reference>
<keyword id="KW-0325">Glycoprotein</keyword>
<keyword id="KW-0472">Membrane</keyword>
<keyword id="KW-0560">Oxidoreductase</keyword>
<keyword id="KW-0732">Signal</keyword>
<keyword id="KW-0812">Transmembrane</keyword>
<keyword id="KW-1133">Transmembrane helix</keyword>
<keyword id="KW-0843">Virulence</keyword>
<gene>
    <name evidence="4" type="primary">gkaX</name>
</gene>
<comment type="function">
    <text evidence="3 6">Epoxidase; part of the gene cluster that mediates the biosynthesis of GKK1032, fungal natural products containing a macrocyclic para-cyclophane connected to a decahydrofluorene ring system that show potent antitumor activities (PubMed:33834778). Within the pathway, gkaX functions synergistically with gkaB and gkaZ to form the cyclophane (PubMed:33834778). The pathway begins with the PKS-NRPS gkaA which, with the help of the trans-enoyl reductase gkaC, synthesizes the polyketide-tyrosyl acyl thioester product which can be reductively off-loaded by the terminal reductase (R) domain in gkaA. The alpha/beta hydrolase gkaG is then required to catalyze the subsequent Knoevenagel condensation that affords the 3-pyrrolin-2-one ring, whereas the three proteins gkaB, gkaX and gkaZ then function synergistically to form the cyclophane (Probable).</text>
</comment>
<comment type="pathway">
    <text evidence="3">Mycotoxin biosynthesis.</text>
</comment>
<comment type="subcellular location">
    <subcellularLocation>
        <location evidence="1">Membrane</location>
        <topology evidence="1">Multi-pass membrane protein</topology>
    </subcellularLocation>
</comment>
<comment type="similarity">
    <text evidence="5">Belongs to the epoxidase xenD family.</text>
</comment>